<gene>
    <name type="primary">faeA</name>
    <name type="ordered locus">Mbar_A2060</name>
</gene>
<protein>
    <recommendedName>
        <fullName>5,6,7,8-tetrahydromethanopterin hydro-lyase</fullName>
        <ecNumber>4.2.1.147</ecNumber>
    </recommendedName>
    <alternativeName>
        <fullName>Formaldehyde-activating enzyme</fullName>
        <shortName>Fae</shortName>
    </alternativeName>
</protein>
<keyword id="KW-0963">Cytoplasm</keyword>
<keyword id="KW-0456">Lyase</keyword>
<evidence type="ECO:0000250" key="1"/>
<evidence type="ECO:0000269" key="2">
    <source>
    </source>
</evidence>
<evidence type="ECO:0000305" key="3"/>
<comment type="function">
    <text evidence="2">Catalyzes the condensation of formaldehyde with tetrahydromethanopterin (H(4)MPT) to 5,10-methylenetetrahydromethanopterin.</text>
</comment>
<comment type="catalytic activity">
    <reaction>
        <text>5,6,7,8-tetrahydromethanopterin + formaldehyde = 5,10-methylenetetrahydromethanopterin + H2O</text>
        <dbReference type="Rhea" id="RHEA:24678"/>
        <dbReference type="ChEBI" id="CHEBI:15377"/>
        <dbReference type="ChEBI" id="CHEBI:16842"/>
        <dbReference type="ChEBI" id="CHEBI:57818"/>
        <dbReference type="ChEBI" id="CHEBI:58103"/>
        <dbReference type="EC" id="4.2.1.147"/>
    </reaction>
</comment>
<comment type="biophysicochemical properties">
    <kinetics>
        <KM evidence="2">30 uM for H(4)MPT</KM>
        <KM evidence="2">0.1 mM for formaldehyde</KM>
        <Vmax evidence="2">13.0 umol/min/mg enzyme</Vmax>
    </kinetics>
</comment>
<comment type="subcellular location">
    <subcellularLocation>
        <location evidence="2">Cytoplasm</location>
    </subcellularLocation>
</comment>
<comment type="similarity">
    <text evidence="3">Belongs to the formaldehyde-activating enzyme family.</text>
</comment>
<accession>Q46AU8</accession>
<sequence>MFIKYAEVLNLVKNILKSMVGEALIGSGPEVAHIDLVIGPRGGSVEAAFMNSLAMPRQGHTPLLAVLEPNIQPKPTTLIVNKVTIKNVSQAALMFGPAQAAVAKAVMDSVADGVLPEEQADDIFIIVSVFIEWDAKDKDKVYEFNYEATKLAIARAMEGRPTVEEALAKKDSANHPFA</sequence>
<feature type="chain" id="PRO_0000235169" description="5,6,7,8-tetrahydromethanopterin hydro-lyase">
    <location>
        <begin position="1"/>
        <end position="178"/>
    </location>
</feature>
<feature type="active site" description="Proton donor" evidence="1">
    <location>
        <position position="33"/>
    </location>
</feature>
<feature type="binding site" evidence="1">
    <location>
        <position position="35"/>
    </location>
    <ligand>
        <name>substrate</name>
    </ligand>
</feature>
<feature type="binding site" evidence="1">
    <location>
        <position position="64"/>
    </location>
    <ligand>
        <name>substrate</name>
    </ligand>
</feature>
<feature type="binding site" evidence="1">
    <location>
        <position position="82"/>
    </location>
    <ligand>
        <name>substrate</name>
    </ligand>
</feature>
<feature type="binding site" evidence="1">
    <location>
        <position position="84"/>
    </location>
    <ligand>
        <name>substrate</name>
    </ligand>
</feature>
<feature type="binding site" evidence="1">
    <location>
        <position position="99"/>
    </location>
    <ligand>
        <name>substrate</name>
    </ligand>
</feature>
<reference key="1">
    <citation type="journal article" date="2006" name="J. Bacteriol.">
        <title>The Methanosarcina barkeri genome: comparative analysis with Methanosarcina acetivorans and Methanosarcina mazei reveals extensive rearrangement within methanosarcinal genomes.</title>
        <authorList>
            <person name="Maeder D.L."/>
            <person name="Anderson I."/>
            <person name="Brettin T.S."/>
            <person name="Bruce D.C."/>
            <person name="Gilna P."/>
            <person name="Han C.S."/>
            <person name="Lapidus A."/>
            <person name="Metcalf W.W."/>
            <person name="Saunders E."/>
            <person name="Tapia R."/>
            <person name="Sowers K.R."/>
        </authorList>
    </citation>
    <scope>NUCLEOTIDE SEQUENCE [LARGE SCALE GENOMIC DNA]</scope>
    <source>
        <strain>Fusaro / DSM 804</strain>
    </source>
</reference>
<reference key="2">
    <citation type="journal article" date="2005" name="Arch. Microbiol.">
        <title>Formaldehyde activating enzyme (Fae) and hexulose-6-phosphate synthase (Hps) in Methanosarcina barkeri: a possible function in ribose-5-phosphate biosynthesis.</title>
        <authorList>
            <person name="Goenrich M."/>
            <person name="Thauer R.K."/>
            <person name="Yurimoto H."/>
            <person name="Kato N."/>
        </authorList>
    </citation>
    <scope>FUNCTION</scope>
    <scope>CHARACTERIZATION</scope>
    <scope>SUBCELLULAR LOCATION</scope>
    <scope>BIOPHYSICOCHEMICAL PROPERTIES</scope>
</reference>
<name>FAE_METBF</name>
<organism>
    <name type="scientific">Methanosarcina barkeri (strain Fusaro / DSM 804)</name>
    <dbReference type="NCBI Taxonomy" id="269797"/>
    <lineage>
        <taxon>Archaea</taxon>
        <taxon>Methanobacteriati</taxon>
        <taxon>Methanobacteriota</taxon>
        <taxon>Stenosarchaea group</taxon>
        <taxon>Methanomicrobia</taxon>
        <taxon>Methanosarcinales</taxon>
        <taxon>Methanosarcinaceae</taxon>
        <taxon>Methanosarcina</taxon>
    </lineage>
</organism>
<proteinExistence type="evidence at protein level"/>
<dbReference type="EC" id="4.2.1.147"/>
<dbReference type="EMBL" id="CP000099">
    <property type="protein sequence ID" value="AAZ70994.1"/>
    <property type="molecule type" value="Genomic_DNA"/>
</dbReference>
<dbReference type="SMR" id="Q46AU8"/>
<dbReference type="STRING" id="269797.Mbar_A2060"/>
<dbReference type="PaxDb" id="269797-Mbar_A2060"/>
<dbReference type="KEGG" id="mba:Mbar_A2060"/>
<dbReference type="eggNOG" id="arCOG00104">
    <property type="taxonomic scope" value="Archaea"/>
</dbReference>
<dbReference type="HOGENOM" id="CLU_105382_0_0_2"/>
<dbReference type="SABIO-RK" id="Q46AU8"/>
<dbReference type="GO" id="GO:0005737">
    <property type="term" value="C:cytoplasm"/>
    <property type="evidence" value="ECO:0007669"/>
    <property type="project" value="UniProtKB-SubCell"/>
</dbReference>
<dbReference type="GO" id="GO:0016840">
    <property type="term" value="F:carbon-nitrogen lyase activity"/>
    <property type="evidence" value="ECO:0007669"/>
    <property type="project" value="InterPro"/>
</dbReference>
<dbReference type="GO" id="GO:0016051">
    <property type="term" value="P:carbohydrate biosynthetic process"/>
    <property type="evidence" value="ECO:0007669"/>
    <property type="project" value="InterPro"/>
</dbReference>
<dbReference type="FunFam" id="3.30.230.60:FF:000001">
    <property type="entry name" value="5,6,7,8-tetrahydromethanopterin hydro-lyase"/>
    <property type="match status" value="1"/>
</dbReference>
<dbReference type="Gene3D" id="3.30.230.60">
    <property type="entry name" value="Formaldehyde-activating enzyme"/>
    <property type="match status" value="1"/>
</dbReference>
<dbReference type="InterPro" id="IPR014826">
    <property type="entry name" value="HCHO-activating_enzyme"/>
</dbReference>
<dbReference type="InterPro" id="IPR037075">
    <property type="entry name" value="HCHO-activating_enzyme_sf"/>
</dbReference>
<dbReference type="InterPro" id="IPR020568">
    <property type="entry name" value="Ribosomal_Su5_D2-typ_SF"/>
</dbReference>
<dbReference type="NCBIfam" id="TIGR03126">
    <property type="entry name" value="one_C_fae"/>
    <property type="match status" value="1"/>
</dbReference>
<dbReference type="Pfam" id="PF08714">
    <property type="entry name" value="Fae"/>
    <property type="match status" value="1"/>
</dbReference>
<dbReference type="SUPFAM" id="SSF54211">
    <property type="entry name" value="Ribosomal protein S5 domain 2-like"/>
    <property type="match status" value="1"/>
</dbReference>